<sequence length="95" mass="10181">MAFKPLHDRVLVRRVQSDEKTKGGLIIPDTAKEKPAEGEVVACGEGARKDSGELIAMSVKAGDRVLFGKWSGTEVTIDGAELLIMKESDILGILS</sequence>
<reference key="1">
    <citation type="submission" date="2001-08" db="EMBL/GenBank/DDBJ databases">
        <title>Cloning and sequencing of the groESL operon of Rhodopseudomonas palustris.</title>
        <authorList>
            <person name="Xiao M."/>
            <person name="Zhu C.R."/>
            <person name="Qian X.M."/>
            <person name="Zheng P."/>
            <person name="Chen Y.Y."/>
        </authorList>
    </citation>
    <scope>NUCLEOTIDE SEQUENCE [GENOMIC DNA]</scope>
</reference>
<comment type="function">
    <text evidence="1">Together with the chaperonin GroEL, plays an essential role in assisting protein folding. The GroEL-GroES system forms a nano-cage that allows encapsulation of the non-native substrate proteins and provides a physical environment optimized to promote and accelerate protein folding. GroES binds to the apical surface of the GroEL ring, thereby capping the opening of the GroEL channel.</text>
</comment>
<comment type="subunit">
    <text evidence="1">Heptamer of 7 subunits arranged in a ring. Interacts with the chaperonin GroEL.</text>
</comment>
<comment type="subcellular location">
    <subcellularLocation>
        <location evidence="1">Cytoplasm</location>
    </subcellularLocation>
</comment>
<comment type="similarity">
    <text evidence="1">Belongs to the GroES chaperonin family.</text>
</comment>
<organism>
    <name type="scientific">Rhodopseudomonas palustris</name>
    <dbReference type="NCBI Taxonomy" id="1076"/>
    <lineage>
        <taxon>Bacteria</taxon>
        <taxon>Pseudomonadati</taxon>
        <taxon>Pseudomonadota</taxon>
        <taxon>Alphaproteobacteria</taxon>
        <taxon>Hyphomicrobiales</taxon>
        <taxon>Nitrobacteraceae</taxon>
        <taxon>Rhodopseudomonas</taxon>
    </lineage>
</organism>
<name>CH10_RHOPL</name>
<keyword id="KW-0143">Chaperone</keyword>
<keyword id="KW-0963">Cytoplasm</keyword>
<accession>Q93MH2</accession>
<proteinExistence type="inferred from homology"/>
<dbReference type="EMBL" id="AF406639">
    <property type="protein sequence ID" value="AAK94942.1"/>
    <property type="molecule type" value="Genomic_DNA"/>
</dbReference>
<dbReference type="SMR" id="Q93MH2"/>
<dbReference type="GO" id="GO:0005737">
    <property type="term" value="C:cytoplasm"/>
    <property type="evidence" value="ECO:0007669"/>
    <property type="project" value="UniProtKB-SubCell"/>
</dbReference>
<dbReference type="GO" id="GO:0005524">
    <property type="term" value="F:ATP binding"/>
    <property type="evidence" value="ECO:0007669"/>
    <property type="project" value="InterPro"/>
</dbReference>
<dbReference type="GO" id="GO:0046872">
    <property type="term" value="F:metal ion binding"/>
    <property type="evidence" value="ECO:0007669"/>
    <property type="project" value="TreeGrafter"/>
</dbReference>
<dbReference type="GO" id="GO:0044183">
    <property type="term" value="F:protein folding chaperone"/>
    <property type="evidence" value="ECO:0007669"/>
    <property type="project" value="InterPro"/>
</dbReference>
<dbReference type="GO" id="GO:0051087">
    <property type="term" value="F:protein-folding chaperone binding"/>
    <property type="evidence" value="ECO:0007669"/>
    <property type="project" value="TreeGrafter"/>
</dbReference>
<dbReference type="GO" id="GO:0051082">
    <property type="term" value="F:unfolded protein binding"/>
    <property type="evidence" value="ECO:0007669"/>
    <property type="project" value="TreeGrafter"/>
</dbReference>
<dbReference type="GO" id="GO:0051085">
    <property type="term" value="P:chaperone cofactor-dependent protein refolding"/>
    <property type="evidence" value="ECO:0007669"/>
    <property type="project" value="TreeGrafter"/>
</dbReference>
<dbReference type="CDD" id="cd00320">
    <property type="entry name" value="cpn10"/>
    <property type="match status" value="1"/>
</dbReference>
<dbReference type="FunFam" id="2.30.33.40:FF:000001">
    <property type="entry name" value="10 kDa chaperonin"/>
    <property type="match status" value="1"/>
</dbReference>
<dbReference type="Gene3D" id="2.30.33.40">
    <property type="entry name" value="GroES chaperonin"/>
    <property type="match status" value="1"/>
</dbReference>
<dbReference type="HAMAP" id="MF_00580">
    <property type="entry name" value="CH10"/>
    <property type="match status" value="1"/>
</dbReference>
<dbReference type="InterPro" id="IPR020818">
    <property type="entry name" value="Chaperonin_GroES"/>
</dbReference>
<dbReference type="InterPro" id="IPR037124">
    <property type="entry name" value="Chaperonin_GroES_sf"/>
</dbReference>
<dbReference type="InterPro" id="IPR018369">
    <property type="entry name" value="Chaprnonin_Cpn10_CS"/>
</dbReference>
<dbReference type="InterPro" id="IPR011032">
    <property type="entry name" value="GroES-like_sf"/>
</dbReference>
<dbReference type="NCBIfam" id="NF001527">
    <property type="entry name" value="PRK00364.1-2"/>
    <property type="match status" value="1"/>
</dbReference>
<dbReference type="NCBIfam" id="NF001529">
    <property type="entry name" value="PRK00364.1-5"/>
    <property type="match status" value="1"/>
</dbReference>
<dbReference type="NCBIfam" id="NF001531">
    <property type="entry name" value="PRK00364.2-2"/>
    <property type="match status" value="1"/>
</dbReference>
<dbReference type="NCBIfam" id="NF001533">
    <property type="entry name" value="PRK00364.2-4"/>
    <property type="match status" value="1"/>
</dbReference>
<dbReference type="PANTHER" id="PTHR10772">
    <property type="entry name" value="10 KDA HEAT SHOCK PROTEIN"/>
    <property type="match status" value="1"/>
</dbReference>
<dbReference type="PANTHER" id="PTHR10772:SF58">
    <property type="entry name" value="CO-CHAPERONIN GROES"/>
    <property type="match status" value="1"/>
</dbReference>
<dbReference type="Pfam" id="PF00166">
    <property type="entry name" value="Cpn10"/>
    <property type="match status" value="1"/>
</dbReference>
<dbReference type="PRINTS" id="PR00297">
    <property type="entry name" value="CHAPERONIN10"/>
</dbReference>
<dbReference type="SMART" id="SM00883">
    <property type="entry name" value="Cpn10"/>
    <property type="match status" value="1"/>
</dbReference>
<dbReference type="SUPFAM" id="SSF50129">
    <property type="entry name" value="GroES-like"/>
    <property type="match status" value="1"/>
</dbReference>
<dbReference type="PROSITE" id="PS00681">
    <property type="entry name" value="CHAPERONINS_CPN10"/>
    <property type="match status" value="1"/>
</dbReference>
<gene>
    <name evidence="1" type="primary">groES</name>
    <name evidence="1" type="synonym">groS</name>
</gene>
<protein>
    <recommendedName>
        <fullName evidence="1">Co-chaperonin GroES</fullName>
    </recommendedName>
    <alternativeName>
        <fullName evidence="1">10 kDa chaperonin</fullName>
    </alternativeName>
    <alternativeName>
        <fullName evidence="1">Chaperonin-10</fullName>
        <shortName evidence="1">Cpn10</shortName>
    </alternativeName>
</protein>
<evidence type="ECO:0000255" key="1">
    <source>
        <dbReference type="HAMAP-Rule" id="MF_00580"/>
    </source>
</evidence>
<feature type="chain" id="PRO_0000174827" description="Co-chaperonin GroES">
    <location>
        <begin position="1"/>
        <end position="95"/>
    </location>
</feature>